<protein>
    <recommendedName>
        <fullName evidence="1">6-phospho-beta-galactosidase</fullName>
        <ecNumber evidence="1">3.2.1.85</ecNumber>
    </recommendedName>
    <alternativeName>
        <fullName evidence="1">Beta-D-phosphogalactoside galactohydrolase</fullName>
        <shortName evidence="1">PGALase</shortName>
    </alternativeName>
    <alternativeName>
        <fullName evidence="1">P-beta-Gal</fullName>
        <shortName evidence="1">PBG</shortName>
    </alternativeName>
</protein>
<sequence length="474" mass="53968">MSKQLPQDFVMGGATAAYQVEGATKEDGKGRVLWDDFLDKQGRFKPDPAADFYHRYDEDLALAEKYGHQVIRVSIAWSRIFPDGAGEVEPRGVAFYHKLFADCAAHHIEPFVTLHHFDTPERLHEAGDWLSQEMLDDFVAYAKFCFEEFSEVKYWITINEPTSMAVQQYTSGTFPPAESGRFDKTFQAEHNQMVAHARIVNLYKSMQLGGQIGIVHALQTVYPYSDSAVDHHAAELQDALENRLYLDGTLAGEYHQETLALVKEILDANHQPMFQSTPQEMKAIDEAAHQLDFVGVNNYFSKWLRAYHGKSETIHNGDGTKGSSVARLQGVGEEKLPDGIETTDWDWSIYPRGMYDILMRIHNDYPLVPVTYVTENGIGLKESLPENATPDTVIEDPKRIDYVKKYLSAMADAIHDGANVKGYFIWSLQDQFSWTNGYSKRYGLFFVDFPTQNRYIKQSAEWFKSVSETHIIPD</sequence>
<accession>B3W7I3</accession>
<name>LACG_LACCB</name>
<reference key="1">
    <citation type="submission" date="2008-06" db="EMBL/GenBank/DDBJ databases">
        <title>Lactobacillus casei BL23 complete genome sequence.</title>
        <authorList>
            <person name="Maze A."/>
            <person name="Boel G."/>
            <person name="Bourand A."/>
            <person name="Loux V."/>
            <person name="Gibrat J.F."/>
            <person name="Zuniga M."/>
            <person name="Hartke A."/>
            <person name="Deutscher J."/>
        </authorList>
    </citation>
    <scope>NUCLEOTIDE SEQUENCE [LARGE SCALE GENOMIC DNA]</scope>
    <source>
        <strain>BL23</strain>
    </source>
</reference>
<proteinExistence type="inferred from homology"/>
<evidence type="ECO:0000255" key="1">
    <source>
        <dbReference type="HAMAP-Rule" id="MF_01574"/>
    </source>
</evidence>
<keyword id="KW-0326">Glycosidase</keyword>
<keyword id="KW-0378">Hydrolase</keyword>
<dbReference type="EC" id="3.2.1.85" evidence="1"/>
<dbReference type="EMBL" id="FM177140">
    <property type="protein sequence ID" value="CAQ65853.1"/>
    <property type="molecule type" value="Genomic_DNA"/>
</dbReference>
<dbReference type="SMR" id="B3W7I3"/>
<dbReference type="CAZy" id="GH1">
    <property type="family name" value="Glycoside Hydrolase Family 1"/>
</dbReference>
<dbReference type="KEGG" id="lcb:LCABL_07280"/>
<dbReference type="HOGENOM" id="CLU_001859_1_3_9"/>
<dbReference type="UniPathway" id="UPA00542">
    <property type="reaction ID" value="UER00605"/>
</dbReference>
<dbReference type="GO" id="GO:0005829">
    <property type="term" value="C:cytosol"/>
    <property type="evidence" value="ECO:0007669"/>
    <property type="project" value="TreeGrafter"/>
</dbReference>
<dbReference type="GO" id="GO:0033920">
    <property type="term" value="F:6-phospho-beta-galactosidase activity"/>
    <property type="evidence" value="ECO:0007669"/>
    <property type="project" value="UniProtKB-UniRule"/>
</dbReference>
<dbReference type="GO" id="GO:0008422">
    <property type="term" value="F:beta-glucosidase activity"/>
    <property type="evidence" value="ECO:0007669"/>
    <property type="project" value="TreeGrafter"/>
</dbReference>
<dbReference type="GO" id="GO:0019512">
    <property type="term" value="P:lactose catabolic process via tagatose-6-phosphate"/>
    <property type="evidence" value="ECO:0007669"/>
    <property type="project" value="InterPro"/>
</dbReference>
<dbReference type="FunFam" id="3.20.20.80:FF:000004">
    <property type="entry name" value="Beta-glucosidase 6-phospho-beta-glucosidase"/>
    <property type="match status" value="1"/>
</dbReference>
<dbReference type="Gene3D" id="3.20.20.80">
    <property type="entry name" value="Glycosidases"/>
    <property type="match status" value="1"/>
</dbReference>
<dbReference type="HAMAP" id="MF_01574">
    <property type="entry name" value="LacG"/>
    <property type="match status" value="1"/>
</dbReference>
<dbReference type="InterPro" id="IPR005928">
    <property type="entry name" value="6P-beta-galactosidase"/>
</dbReference>
<dbReference type="InterPro" id="IPR001360">
    <property type="entry name" value="Glyco_hydro_1"/>
</dbReference>
<dbReference type="InterPro" id="IPR018120">
    <property type="entry name" value="Glyco_hydro_1_AS"/>
</dbReference>
<dbReference type="InterPro" id="IPR033132">
    <property type="entry name" value="Glyco_hydro_1_N_CS"/>
</dbReference>
<dbReference type="InterPro" id="IPR017853">
    <property type="entry name" value="Glycoside_hydrolase_SF"/>
</dbReference>
<dbReference type="NCBIfam" id="TIGR01233">
    <property type="entry name" value="lacG"/>
    <property type="match status" value="1"/>
</dbReference>
<dbReference type="NCBIfam" id="NF010036">
    <property type="entry name" value="PRK13511.1"/>
    <property type="match status" value="1"/>
</dbReference>
<dbReference type="PANTHER" id="PTHR10353">
    <property type="entry name" value="GLYCOSYL HYDROLASE"/>
    <property type="match status" value="1"/>
</dbReference>
<dbReference type="PANTHER" id="PTHR10353:SF36">
    <property type="entry name" value="LP05116P"/>
    <property type="match status" value="1"/>
</dbReference>
<dbReference type="Pfam" id="PF00232">
    <property type="entry name" value="Glyco_hydro_1"/>
    <property type="match status" value="1"/>
</dbReference>
<dbReference type="PRINTS" id="PR00131">
    <property type="entry name" value="GLHYDRLASE1"/>
</dbReference>
<dbReference type="SUPFAM" id="SSF51445">
    <property type="entry name" value="(Trans)glycosidases"/>
    <property type="match status" value="1"/>
</dbReference>
<dbReference type="PROSITE" id="PS00572">
    <property type="entry name" value="GLYCOSYL_HYDROL_F1_1"/>
    <property type="match status" value="1"/>
</dbReference>
<dbReference type="PROSITE" id="PS00653">
    <property type="entry name" value="GLYCOSYL_HYDROL_F1_2"/>
    <property type="match status" value="1"/>
</dbReference>
<comment type="catalytic activity">
    <reaction evidence="1">
        <text>a 6-phospho-beta-D-galactoside + H2O = D-galactose 6-phosphate + an alcohol</text>
        <dbReference type="Rhea" id="RHEA:24568"/>
        <dbReference type="ChEBI" id="CHEBI:15377"/>
        <dbReference type="ChEBI" id="CHEBI:30879"/>
        <dbReference type="ChEBI" id="CHEBI:58534"/>
        <dbReference type="ChEBI" id="CHEBI:91004"/>
        <dbReference type="EC" id="3.2.1.85"/>
    </reaction>
</comment>
<comment type="pathway">
    <text evidence="1">Carbohydrate metabolism; lactose degradation; D-galactose 6-phosphate and beta-D-glucose from lactose 6-phosphate: step 1/1.</text>
</comment>
<comment type="similarity">
    <text evidence="1">Belongs to the glycosyl hydrolase 1 family.</text>
</comment>
<organism>
    <name type="scientific">Lacticaseibacillus casei (strain BL23)</name>
    <name type="common">Lactobacillus casei</name>
    <dbReference type="NCBI Taxonomy" id="543734"/>
    <lineage>
        <taxon>Bacteria</taxon>
        <taxon>Bacillati</taxon>
        <taxon>Bacillota</taxon>
        <taxon>Bacilli</taxon>
        <taxon>Lactobacillales</taxon>
        <taxon>Lactobacillaceae</taxon>
        <taxon>Lacticaseibacillus</taxon>
    </lineage>
</organism>
<gene>
    <name evidence="1" type="primary">lacG</name>
    <name type="ordered locus">LCABL_07280</name>
</gene>
<feature type="chain" id="PRO_1000147418" description="6-phospho-beta-galactosidase">
    <location>
        <begin position="1"/>
        <end position="474"/>
    </location>
</feature>
<feature type="active site" description="Proton donor" evidence="1">
    <location>
        <position position="160"/>
    </location>
</feature>
<feature type="active site" description="Nucleophile" evidence="1">
    <location>
        <position position="375"/>
    </location>
</feature>
<feature type="binding site" evidence="1">
    <location>
        <position position="19"/>
    </location>
    <ligand>
        <name>D-galactose 6-phosphate</name>
        <dbReference type="ChEBI" id="CHEBI:91004"/>
    </ligand>
</feature>
<feature type="binding site" evidence="1">
    <location>
        <position position="116"/>
    </location>
    <ligand>
        <name>D-galactose 6-phosphate</name>
        <dbReference type="ChEBI" id="CHEBI:91004"/>
    </ligand>
</feature>
<feature type="binding site" evidence="1">
    <location>
        <position position="159"/>
    </location>
    <ligand>
        <name>D-galactose 6-phosphate</name>
        <dbReference type="ChEBI" id="CHEBI:91004"/>
    </ligand>
</feature>
<feature type="binding site" evidence="1">
    <location>
        <position position="160"/>
    </location>
    <ligand>
        <name>D-galactose 6-phosphate</name>
        <dbReference type="ChEBI" id="CHEBI:91004"/>
    </ligand>
</feature>
<feature type="binding site" evidence="1">
    <location>
        <position position="297"/>
    </location>
    <ligand>
        <name>D-galactose 6-phosphate</name>
        <dbReference type="ChEBI" id="CHEBI:91004"/>
    </ligand>
</feature>
<feature type="binding site" evidence="1">
    <location>
        <position position="433"/>
    </location>
    <ligand>
        <name>D-galactose 6-phosphate</name>
        <dbReference type="ChEBI" id="CHEBI:91004"/>
    </ligand>
</feature>
<feature type="binding site" evidence="1">
    <location>
        <position position="434"/>
    </location>
    <ligand>
        <name>D-galactose 6-phosphate</name>
        <dbReference type="ChEBI" id="CHEBI:91004"/>
    </ligand>
</feature>
<feature type="binding site" evidence="1">
    <location>
        <position position="440"/>
    </location>
    <ligand>
        <name>D-galactose 6-phosphate</name>
        <dbReference type="ChEBI" id="CHEBI:91004"/>
    </ligand>
</feature>
<feature type="binding site" evidence="1">
    <location>
        <position position="442"/>
    </location>
    <ligand>
        <name>D-galactose 6-phosphate</name>
        <dbReference type="ChEBI" id="CHEBI:91004"/>
    </ligand>
</feature>